<keyword id="KW-0678">Repressor</keyword>
<keyword id="KW-0687">Ribonucleoprotein</keyword>
<keyword id="KW-0689">Ribosomal protein</keyword>
<keyword id="KW-0694">RNA-binding</keyword>
<keyword id="KW-0699">rRNA-binding</keyword>
<keyword id="KW-0810">Translation regulation</keyword>
<keyword id="KW-0820">tRNA-binding</keyword>
<protein>
    <recommendedName>
        <fullName evidence="1">Large ribosomal subunit protein uL1</fullName>
    </recommendedName>
    <alternativeName>
        <fullName evidence="2">50S ribosomal protein L1</fullName>
    </alternativeName>
</protein>
<name>RL1_STAES</name>
<organism>
    <name type="scientific">Staphylococcus epidermidis (strain ATCC 12228 / FDA PCI 1200)</name>
    <dbReference type="NCBI Taxonomy" id="176280"/>
    <lineage>
        <taxon>Bacteria</taxon>
        <taxon>Bacillati</taxon>
        <taxon>Bacillota</taxon>
        <taxon>Bacilli</taxon>
        <taxon>Bacillales</taxon>
        <taxon>Staphylococcaceae</taxon>
        <taxon>Staphylococcus</taxon>
    </lineage>
</organism>
<feature type="chain" id="PRO_0000125737" description="Large ribosomal subunit protein uL1">
    <location>
        <begin position="1"/>
        <end position="231"/>
    </location>
</feature>
<accession>Q8CTT4</accession>
<comment type="function">
    <text evidence="1">Binds directly to 23S rRNA. The L1 stalk is quite mobile in the ribosome, and is involved in E site tRNA release.</text>
</comment>
<comment type="function">
    <text evidence="1">Protein L1 is also a translational repressor protein, it controls the translation of the L11 operon by binding to its mRNA.</text>
</comment>
<comment type="subunit">
    <text evidence="1">Part of the 50S ribosomal subunit.</text>
</comment>
<comment type="similarity">
    <text evidence="1">Belongs to the universal ribosomal protein uL1 family.</text>
</comment>
<reference key="1">
    <citation type="journal article" date="2003" name="Mol. Microbiol.">
        <title>Genome-based analysis of virulence genes in a non-biofilm-forming Staphylococcus epidermidis strain (ATCC 12228).</title>
        <authorList>
            <person name="Zhang Y.-Q."/>
            <person name="Ren S.-X."/>
            <person name="Li H.-L."/>
            <person name="Wang Y.-X."/>
            <person name="Fu G."/>
            <person name="Yang J."/>
            <person name="Qin Z.-Q."/>
            <person name="Miao Y.-G."/>
            <person name="Wang W.-Y."/>
            <person name="Chen R.-S."/>
            <person name="Shen Y."/>
            <person name="Chen Z."/>
            <person name="Yuan Z.-H."/>
            <person name="Zhao G.-P."/>
            <person name="Qu D."/>
            <person name="Danchin A."/>
            <person name="Wen Y.-M."/>
        </authorList>
    </citation>
    <scope>NUCLEOTIDE SEQUENCE [LARGE SCALE GENOMIC DNA]</scope>
    <source>
        <strain>ATCC 12228 / FDA PCI 1200</strain>
    </source>
</reference>
<dbReference type="EMBL" id="AE015929">
    <property type="protein sequence ID" value="AAO03898.1"/>
    <property type="molecule type" value="Genomic_DNA"/>
</dbReference>
<dbReference type="RefSeq" id="NP_763856.1">
    <property type="nucleotide sequence ID" value="NC_004461.1"/>
</dbReference>
<dbReference type="RefSeq" id="WP_001832314.1">
    <property type="nucleotide sequence ID" value="NZ_WBME01000014.1"/>
</dbReference>
<dbReference type="SMR" id="Q8CTT4"/>
<dbReference type="GeneID" id="50019533"/>
<dbReference type="KEGG" id="sep:SE_0301"/>
<dbReference type="PATRIC" id="fig|176280.10.peg.277"/>
<dbReference type="eggNOG" id="COG0081">
    <property type="taxonomic scope" value="Bacteria"/>
</dbReference>
<dbReference type="HOGENOM" id="CLU_062853_0_0_9"/>
<dbReference type="OrthoDB" id="9803740at2"/>
<dbReference type="Proteomes" id="UP000001411">
    <property type="component" value="Chromosome"/>
</dbReference>
<dbReference type="GO" id="GO:0015934">
    <property type="term" value="C:large ribosomal subunit"/>
    <property type="evidence" value="ECO:0007669"/>
    <property type="project" value="InterPro"/>
</dbReference>
<dbReference type="GO" id="GO:0019843">
    <property type="term" value="F:rRNA binding"/>
    <property type="evidence" value="ECO:0007669"/>
    <property type="project" value="UniProtKB-UniRule"/>
</dbReference>
<dbReference type="GO" id="GO:0003735">
    <property type="term" value="F:structural constituent of ribosome"/>
    <property type="evidence" value="ECO:0007669"/>
    <property type="project" value="InterPro"/>
</dbReference>
<dbReference type="GO" id="GO:0000049">
    <property type="term" value="F:tRNA binding"/>
    <property type="evidence" value="ECO:0007669"/>
    <property type="project" value="UniProtKB-KW"/>
</dbReference>
<dbReference type="GO" id="GO:0006417">
    <property type="term" value="P:regulation of translation"/>
    <property type="evidence" value="ECO:0007669"/>
    <property type="project" value="UniProtKB-KW"/>
</dbReference>
<dbReference type="GO" id="GO:0006412">
    <property type="term" value="P:translation"/>
    <property type="evidence" value="ECO:0007669"/>
    <property type="project" value="UniProtKB-UniRule"/>
</dbReference>
<dbReference type="CDD" id="cd00403">
    <property type="entry name" value="Ribosomal_L1"/>
    <property type="match status" value="1"/>
</dbReference>
<dbReference type="FunFam" id="3.40.50.790:FF:000001">
    <property type="entry name" value="50S ribosomal protein L1"/>
    <property type="match status" value="1"/>
</dbReference>
<dbReference type="Gene3D" id="3.30.190.20">
    <property type="match status" value="1"/>
</dbReference>
<dbReference type="Gene3D" id="3.40.50.790">
    <property type="match status" value="1"/>
</dbReference>
<dbReference type="HAMAP" id="MF_01318_B">
    <property type="entry name" value="Ribosomal_uL1_B"/>
    <property type="match status" value="1"/>
</dbReference>
<dbReference type="InterPro" id="IPR005878">
    <property type="entry name" value="Ribosom_uL1_bac-type"/>
</dbReference>
<dbReference type="InterPro" id="IPR002143">
    <property type="entry name" value="Ribosomal_uL1"/>
</dbReference>
<dbReference type="InterPro" id="IPR023674">
    <property type="entry name" value="Ribosomal_uL1-like"/>
</dbReference>
<dbReference type="InterPro" id="IPR028364">
    <property type="entry name" value="Ribosomal_uL1/biogenesis"/>
</dbReference>
<dbReference type="InterPro" id="IPR016095">
    <property type="entry name" value="Ribosomal_uL1_3-a/b-sand"/>
</dbReference>
<dbReference type="InterPro" id="IPR023673">
    <property type="entry name" value="Ribosomal_uL1_CS"/>
</dbReference>
<dbReference type="NCBIfam" id="TIGR01169">
    <property type="entry name" value="rplA_bact"/>
    <property type="match status" value="1"/>
</dbReference>
<dbReference type="PANTHER" id="PTHR36427">
    <property type="entry name" value="54S RIBOSOMAL PROTEIN L1, MITOCHONDRIAL"/>
    <property type="match status" value="1"/>
</dbReference>
<dbReference type="PANTHER" id="PTHR36427:SF3">
    <property type="entry name" value="LARGE RIBOSOMAL SUBUNIT PROTEIN UL1M"/>
    <property type="match status" value="1"/>
</dbReference>
<dbReference type="Pfam" id="PF00687">
    <property type="entry name" value="Ribosomal_L1"/>
    <property type="match status" value="1"/>
</dbReference>
<dbReference type="PIRSF" id="PIRSF002155">
    <property type="entry name" value="Ribosomal_L1"/>
    <property type="match status" value="1"/>
</dbReference>
<dbReference type="SUPFAM" id="SSF56808">
    <property type="entry name" value="Ribosomal protein L1"/>
    <property type="match status" value="1"/>
</dbReference>
<dbReference type="PROSITE" id="PS01199">
    <property type="entry name" value="RIBOSOMAL_L1"/>
    <property type="match status" value="1"/>
</dbReference>
<evidence type="ECO:0000255" key="1">
    <source>
        <dbReference type="HAMAP-Rule" id="MF_01318"/>
    </source>
</evidence>
<evidence type="ECO:0000305" key="2"/>
<gene>
    <name evidence="1" type="primary">rplA</name>
    <name type="ordered locus">SE_0301</name>
</gene>
<sequence>MAKKGKKYQEAASKVDRTQYYSVEEAIKLAKETSVANFDASVEVAFRLGIDTRKNDQQIRGAVVLPHGTGKSQRVLVFAKGDKITEAEEAGADYVGEADYVQKIQQGWFDFDVVVATPDMMGEVGKLGRVLGPKGLMPNPKTGTVTMDVKKAVEEIKAGKVEYRAEKAGIVHASIGKVSFDEEKLVDNFRTLQDVLAKAKPASAKGTYFKSVAVTTTMGPGVKVDTSSFKL</sequence>
<proteinExistence type="inferred from homology"/>